<organism>
    <name type="scientific">Mus musculus</name>
    <name type="common">Mouse</name>
    <dbReference type="NCBI Taxonomy" id="10090"/>
    <lineage>
        <taxon>Eukaryota</taxon>
        <taxon>Metazoa</taxon>
        <taxon>Chordata</taxon>
        <taxon>Craniata</taxon>
        <taxon>Vertebrata</taxon>
        <taxon>Euteleostomi</taxon>
        <taxon>Mammalia</taxon>
        <taxon>Eutheria</taxon>
        <taxon>Euarchontoglires</taxon>
        <taxon>Glires</taxon>
        <taxon>Rodentia</taxon>
        <taxon>Myomorpha</taxon>
        <taxon>Muroidea</taxon>
        <taxon>Muridae</taxon>
        <taxon>Murinae</taxon>
        <taxon>Mus</taxon>
        <taxon>Mus</taxon>
    </lineage>
</organism>
<comment type="function">
    <text evidence="1">May play a role in the negative regulation of cell cycle progression.</text>
</comment>
<comment type="subcellular location">
    <subcellularLocation>
        <location evidence="1">Cytoplasm</location>
    </subcellularLocation>
</comment>
<comment type="alternative products">
    <event type="alternative splicing"/>
    <isoform>
        <id>Q9Z2L7-1</id>
        <name>1</name>
        <sequence type="displayed"/>
    </isoform>
    <isoform>
        <id>Q9Z2L7-2</id>
        <name>2</name>
        <sequence type="described" ref="VSP_025847 VSP_025848"/>
    </isoform>
</comment>
<comment type="similarity">
    <text evidence="5">Belongs to the cytokine receptor-like factor 3 family.</text>
</comment>
<comment type="sequence caution" evidence="5">
    <conflict type="erroneous gene model prediction">
        <sequence resource="EMBL-CDS" id="CAI24764"/>
    </conflict>
</comment>
<feature type="chain" id="PRO_0000288937" description="Cytokine receptor-like factor 3">
    <location>
        <begin position="1"/>
        <end position="442"/>
    </location>
</feature>
<feature type="domain" description="Fibronectin type-III" evidence="3">
    <location>
        <begin position="181"/>
        <end position="274"/>
    </location>
</feature>
<feature type="coiled-coil region" evidence="2">
    <location>
        <begin position="10"/>
        <end position="46"/>
    </location>
</feature>
<feature type="splice variant" id="VSP_025847" description="In isoform 2." evidence="4">
    <original>VETVGQPDRRDSIGVCAERQNGYE</original>
    <variation>CSLCQWKRNDQSVACSYLWLHCHI</variation>
    <location>
        <begin position="321"/>
        <end position="344"/>
    </location>
</feature>
<feature type="splice variant" id="VSP_025848" description="In isoform 2." evidence="4">
    <location>
        <begin position="345"/>
        <end position="442"/>
    </location>
</feature>
<feature type="strand" evidence="6">
    <location>
        <begin position="182"/>
        <end position="190"/>
    </location>
</feature>
<feature type="strand" evidence="6">
    <location>
        <begin position="195"/>
        <end position="202"/>
    </location>
</feature>
<feature type="strand" evidence="6">
    <location>
        <begin position="208"/>
        <end position="217"/>
    </location>
</feature>
<feature type="strand" evidence="6">
    <location>
        <begin position="224"/>
        <end position="230"/>
    </location>
</feature>
<feature type="strand" evidence="6">
    <location>
        <begin position="232"/>
        <end position="236"/>
    </location>
</feature>
<feature type="strand" evidence="6">
    <location>
        <begin position="245"/>
        <end position="255"/>
    </location>
</feature>
<feature type="strand" evidence="6">
    <location>
        <begin position="266"/>
        <end position="268"/>
    </location>
</feature>
<feature type="strand" evidence="6">
    <location>
        <begin position="284"/>
        <end position="286"/>
    </location>
</feature>
<feature type="strand" evidence="6">
    <location>
        <begin position="292"/>
        <end position="295"/>
    </location>
</feature>
<feature type="strand" evidence="6">
    <location>
        <begin position="304"/>
        <end position="308"/>
    </location>
</feature>
<feature type="strand" evidence="6">
    <location>
        <begin position="316"/>
        <end position="323"/>
    </location>
</feature>
<feature type="strand" evidence="6">
    <location>
        <begin position="332"/>
        <end position="338"/>
    </location>
</feature>
<feature type="strand" evidence="6">
    <location>
        <begin position="344"/>
        <end position="346"/>
    </location>
</feature>
<feature type="strand" evidence="6">
    <location>
        <begin position="351"/>
        <end position="354"/>
    </location>
</feature>
<feature type="strand" evidence="6">
    <location>
        <begin position="360"/>
        <end position="362"/>
    </location>
</feature>
<feature type="strand" evidence="6">
    <location>
        <begin position="379"/>
        <end position="385"/>
    </location>
</feature>
<feature type="strand" evidence="6">
    <location>
        <begin position="401"/>
        <end position="408"/>
    </location>
</feature>
<feature type="strand" evidence="6">
    <location>
        <begin position="411"/>
        <end position="418"/>
    </location>
</feature>
<feature type="strand" evidence="6">
    <location>
        <begin position="426"/>
        <end position="431"/>
    </location>
</feature>
<feature type="strand" evidence="6">
    <location>
        <begin position="438"/>
        <end position="441"/>
    </location>
</feature>
<proteinExistence type="evidence at protein level"/>
<sequence>MKGAMEPEPEVLLQEARENVEAAQSYRRELGQRLQGLREAQRQIKESASQTRDVLKQHFSDLKGTLGKLLDERLVTLLQEVDTIEQETIKPLDDCQKLIEHGVNTADDLVREGEIAILGGIEEESDKLWNFTKKASHIQLDSLPEVPLLVDVPCLSAQLDDSILNIVKDHIFKHGTVASRPPVQIEELIEKPGGIIVRWCKVDDDFTAQDYRLQFRKCTANHFEDVYVGSETEFIVLHIDPNVDYQFRVCARGDGRQEWSPWSVPQTGHSTLVPHEWTTGFEGYSLSSRRNIALRNDAESSGVLYSSAPTYFCGQTLTFRVETVGQPDRRDSIGVCAERQNGYESLQRDQAVCISTNGAVFVNGKEMTNQLPAVTSGSTVTFDIEAVTLGTSNSHEGGNAKLRVTISSNNREVVFDWLLEQACGPLYFGCSFFYPGWKVLVF</sequence>
<dbReference type="EMBL" id="AF046060">
    <property type="protein sequence ID" value="AAD02423.1"/>
    <property type="molecule type" value="mRNA"/>
</dbReference>
<dbReference type="EMBL" id="AK037880">
    <property type="protein sequence ID" value="BAC29888.1"/>
    <property type="molecule type" value="mRNA"/>
</dbReference>
<dbReference type="EMBL" id="AK137528">
    <property type="protein sequence ID" value="BAE23396.1"/>
    <property type="molecule type" value="mRNA"/>
</dbReference>
<dbReference type="EMBL" id="AK146798">
    <property type="protein sequence ID" value="BAE27440.1"/>
    <property type="molecule type" value="mRNA"/>
</dbReference>
<dbReference type="EMBL" id="AL591113">
    <property type="protein sequence ID" value="CAI24762.1"/>
    <property type="molecule type" value="Genomic_DNA"/>
</dbReference>
<dbReference type="EMBL" id="AL591113">
    <property type="protein sequence ID" value="CAI24763.1"/>
    <property type="molecule type" value="Genomic_DNA"/>
</dbReference>
<dbReference type="EMBL" id="AL591113">
    <property type="protein sequence ID" value="CAI24764.1"/>
    <property type="status" value="ALT_SEQ"/>
    <property type="molecule type" value="Genomic_DNA"/>
</dbReference>
<dbReference type="EMBL" id="BC004780">
    <property type="protein sequence ID" value="AAH04780.1"/>
    <property type="molecule type" value="mRNA"/>
</dbReference>
<dbReference type="EMBL" id="AF120152">
    <property type="protein sequence ID" value="AAD31759.1"/>
    <property type="molecule type" value="mRNA"/>
</dbReference>
<dbReference type="CCDS" id="CCDS25126.1">
    <molecule id="Q9Z2L7-1"/>
</dbReference>
<dbReference type="CCDS" id="CCDS70260.1">
    <molecule id="Q9Z2L7-2"/>
</dbReference>
<dbReference type="RefSeq" id="NP_001264035.1">
    <molecule id="Q9Z2L7-2"/>
    <property type="nucleotide sequence ID" value="NM_001277106.1"/>
</dbReference>
<dbReference type="RefSeq" id="NP_061246.1">
    <molecule id="Q9Z2L7-1"/>
    <property type="nucleotide sequence ID" value="NM_018776.2"/>
</dbReference>
<dbReference type="PDB" id="6RPX">
    <property type="method" value="X-ray"/>
    <property type="resolution" value="1.61 A"/>
    <property type="chains" value="A=174-442"/>
</dbReference>
<dbReference type="PDB" id="6RPY">
    <property type="method" value="X-ray"/>
    <property type="resolution" value="1.97 A"/>
    <property type="chains" value="A=174-442"/>
</dbReference>
<dbReference type="PDB" id="6RPZ">
    <property type="method" value="X-ray"/>
    <property type="resolution" value="1.74 A"/>
    <property type="chains" value="A=174-442"/>
</dbReference>
<dbReference type="PDBsum" id="6RPX"/>
<dbReference type="PDBsum" id="6RPY"/>
<dbReference type="PDBsum" id="6RPZ"/>
<dbReference type="SMR" id="Q9Z2L7"/>
<dbReference type="BioGRID" id="207644">
    <property type="interactions" value="4"/>
</dbReference>
<dbReference type="FunCoup" id="Q9Z2L7">
    <property type="interactions" value="3782"/>
</dbReference>
<dbReference type="IntAct" id="Q9Z2L7">
    <property type="interactions" value="1"/>
</dbReference>
<dbReference type="STRING" id="10090.ENSMUSP00000060028"/>
<dbReference type="PhosphoSitePlus" id="Q9Z2L7"/>
<dbReference type="SwissPalm" id="Q9Z2L7"/>
<dbReference type="PaxDb" id="10090-ENSMUSP00000060028"/>
<dbReference type="PeptideAtlas" id="Q9Z2L7"/>
<dbReference type="ProteomicsDB" id="284022">
    <molecule id="Q9Z2L7-1"/>
</dbReference>
<dbReference type="ProteomicsDB" id="284023">
    <molecule id="Q9Z2L7-2"/>
</dbReference>
<dbReference type="Pumba" id="Q9Z2L7"/>
<dbReference type="Antibodypedia" id="1925">
    <property type="antibodies" value="135 antibodies from 23 providers"/>
</dbReference>
<dbReference type="DNASU" id="54394"/>
<dbReference type="Ensembl" id="ENSMUST00000061283.15">
    <molecule id="Q9Z2L7-1"/>
    <property type="protein sequence ID" value="ENSMUSP00000060028.9"/>
    <property type="gene ID" value="ENSMUSG00000017561.17"/>
</dbReference>
<dbReference type="Ensembl" id="ENSMUST00000103233.10">
    <molecule id="Q9Z2L7-2"/>
    <property type="protein sequence ID" value="ENSMUSP00000099523.4"/>
    <property type="gene ID" value="ENSMUSG00000017561.17"/>
</dbReference>
<dbReference type="GeneID" id="54394"/>
<dbReference type="KEGG" id="mmu:54394"/>
<dbReference type="UCSC" id="uc007kld.2">
    <molecule id="Q9Z2L7-1"/>
    <property type="organism name" value="mouse"/>
</dbReference>
<dbReference type="UCSC" id="uc011yaq.2">
    <molecule id="Q9Z2L7-2"/>
    <property type="organism name" value="mouse"/>
</dbReference>
<dbReference type="AGR" id="MGI:1860086"/>
<dbReference type="CTD" id="51379"/>
<dbReference type="MGI" id="MGI:1860086">
    <property type="gene designation" value="Crlf3"/>
</dbReference>
<dbReference type="VEuPathDB" id="HostDB:ENSMUSG00000017561"/>
<dbReference type="eggNOG" id="ENOG502QQI2">
    <property type="taxonomic scope" value="Eukaryota"/>
</dbReference>
<dbReference type="GeneTree" id="ENSGT00940000153469"/>
<dbReference type="HOGENOM" id="CLU_057983_0_0_1"/>
<dbReference type="InParanoid" id="Q9Z2L7"/>
<dbReference type="OMA" id="HEWTPGF"/>
<dbReference type="OrthoDB" id="9984427at2759"/>
<dbReference type="PhylomeDB" id="Q9Z2L7"/>
<dbReference type="TreeFam" id="TF328682"/>
<dbReference type="BioGRID-ORCS" id="54394">
    <property type="hits" value="3 hits in 78 CRISPR screens"/>
</dbReference>
<dbReference type="ChiTaRS" id="Crlf3">
    <property type="organism name" value="mouse"/>
</dbReference>
<dbReference type="PRO" id="PR:Q9Z2L7"/>
<dbReference type="Proteomes" id="UP000000589">
    <property type="component" value="Chromosome 11"/>
</dbReference>
<dbReference type="RNAct" id="Q9Z2L7">
    <property type="molecule type" value="protein"/>
</dbReference>
<dbReference type="Bgee" id="ENSMUSG00000017561">
    <property type="expression patterns" value="Expressed in peripheral lymph node and 247 other cell types or tissues"/>
</dbReference>
<dbReference type="ExpressionAtlas" id="Q9Z2L7">
    <property type="expression patterns" value="baseline and differential"/>
</dbReference>
<dbReference type="GO" id="GO:0005737">
    <property type="term" value="C:cytoplasm"/>
    <property type="evidence" value="ECO:0000250"/>
    <property type="project" value="UniProtKB"/>
</dbReference>
<dbReference type="GO" id="GO:0005829">
    <property type="term" value="C:cytosol"/>
    <property type="evidence" value="ECO:0007669"/>
    <property type="project" value="Ensembl"/>
</dbReference>
<dbReference type="GO" id="GO:0005886">
    <property type="term" value="C:plasma membrane"/>
    <property type="evidence" value="ECO:0007669"/>
    <property type="project" value="Ensembl"/>
</dbReference>
<dbReference type="GO" id="GO:0042802">
    <property type="term" value="F:identical protein binding"/>
    <property type="evidence" value="ECO:0007669"/>
    <property type="project" value="Ensembl"/>
</dbReference>
<dbReference type="GO" id="GO:0030308">
    <property type="term" value="P:negative regulation of cell growth"/>
    <property type="evidence" value="ECO:0000250"/>
    <property type="project" value="UniProtKB"/>
</dbReference>
<dbReference type="GO" id="GO:2000134">
    <property type="term" value="P:negative regulation of G1/S transition of mitotic cell cycle"/>
    <property type="evidence" value="ECO:0000250"/>
    <property type="project" value="UniProtKB"/>
</dbReference>
<dbReference type="GO" id="GO:0045893">
    <property type="term" value="P:positive regulation of DNA-templated transcription"/>
    <property type="evidence" value="ECO:0000250"/>
    <property type="project" value="UniProtKB"/>
</dbReference>
<dbReference type="GO" id="GO:0046427">
    <property type="term" value="P:positive regulation of receptor signaling pathway via JAK-STAT"/>
    <property type="evidence" value="ECO:0000250"/>
    <property type="project" value="UniProtKB"/>
</dbReference>
<dbReference type="GO" id="GO:0045944">
    <property type="term" value="P:positive regulation of transcription by RNA polymerase II"/>
    <property type="evidence" value="ECO:0000250"/>
    <property type="project" value="UniProtKB"/>
</dbReference>
<dbReference type="CDD" id="cd00063">
    <property type="entry name" value="FN3"/>
    <property type="match status" value="1"/>
</dbReference>
<dbReference type="FunFam" id="2.60.40.10:FF:000573">
    <property type="entry name" value="Cytokine receptor-like factor 3"/>
    <property type="match status" value="1"/>
</dbReference>
<dbReference type="Gene3D" id="2.60.40.10">
    <property type="entry name" value="Immunoglobulins"/>
    <property type="match status" value="1"/>
</dbReference>
<dbReference type="InterPro" id="IPR003961">
    <property type="entry name" value="FN3_dom"/>
</dbReference>
<dbReference type="InterPro" id="IPR036116">
    <property type="entry name" value="FN3_sf"/>
</dbReference>
<dbReference type="InterPro" id="IPR013783">
    <property type="entry name" value="Ig-like_fold"/>
</dbReference>
<dbReference type="SUPFAM" id="SSF49265">
    <property type="entry name" value="Fibronectin type III"/>
    <property type="match status" value="1"/>
</dbReference>
<dbReference type="PROSITE" id="PS50853">
    <property type="entry name" value="FN3"/>
    <property type="match status" value="1"/>
</dbReference>
<reference key="1">
    <citation type="submission" date="1999-01" db="EMBL/GenBank/DDBJ databases">
        <title>An extended gap penalty scheme for profiles results in the discovery of a novel cytokine receptor related transcript in an EST database.</title>
        <authorList>
            <person name="Farrah T."/>
            <person name="Adams R."/>
            <person name="Kho C.-J."/>
            <person name="Yamagiwa T.M."/>
            <person name="Madden K.L."/>
            <person name="Whitmore T."/>
            <person name="Jelmberg A."/>
            <person name="Pownder T."/>
            <person name="Lofton-Day C.E."/>
            <person name="Lok S."/>
        </authorList>
    </citation>
    <scope>NUCLEOTIDE SEQUENCE [MRNA] (ISOFORM 1)</scope>
</reference>
<reference key="2">
    <citation type="journal article" date="2005" name="Science">
        <title>The transcriptional landscape of the mammalian genome.</title>
        <authorList>
            <person name="Carninci P."/>
            <person name="Kasukawa T."/>
            <person name="Katayama S."/>
            <person name="Gough J."/>
            <person name="Frith M.C."/>
            <person name="Maeda N."/>
            <person name="Oyama R."/>
            <person name="Ravasi T."/>
            <person name="Lenhard B."/>
            <person name="Wells C."/>
            <person name="Kodzius R."/>
            <person name="Shimokawa K."/>
            <person name="Bajic V.B."/>
            <person name="Brenner S.E."/>
            <person name="Batalov S."/>
            <person name="Forrest A.R."/>
            <person name="Zavolan M."/>
            <person name="Davis M.J."/>
            <person name="Wilming L.G."/>
            <person name="Aidinis V."/>
            <person name="Allen J.E."/>
            <person name="Ambesi-Impiombato A."/>
            <person name="Apweiler R."/>
            <person name="Aturaliya R.N."/>
            <person name="Bailey T.L."/>
            <person name="Bansal M."/>
            <person name="Baxter L."/>
            <person name="Beisel K.W."/>
            <person name="Bersano T."/>
            <person name="Bono H."/>
            <person name="Chalk A.M."/>
            <person name="Chiu K.P."/>
            <person name="Choudhary V."/>
            <person name="Christoffels A."/>
            <person name="Clutterbuck D.R."/>
            <person name="Crowe M.L."/>
            <person name="Dalla E."/>
            <person name="Dalrymple B.P."/>
            <person name="de Bono B."/>
            <person name="Della Gatta G."/>
            <person name="di Bernardo D."/>
            <person name="Down T."/>
            <person name="Engstrom P."/>
            <person name="Fagiolini M."/>
            <person name="Faulkner G."/>
            <person name="Fletcher C.F."/>
            <person name="Fukushima T."/>
            <person name="Furuno M."/>
            <person name="Futaki S."/>
            <person name="Gariboldi M."/>
            <person name="Georgii-Hemming P."/>
            <person name="Gingeras T.R."/>
            <person name="Gojobori T."/>
            <person name="Green R.E."/>
            <person name="Gustincich S."/>
            <person name="Harbers M."/>
            <person name="Hayashi Y."/>
            <person name="Hensch T.K."/>
            <person name="Hirokawa N."/>
            <person name="Hill D."/>
            <person name="Huminiecki L."/>
            <person name="Iacono M."/>
            <person name="Ikeo K."/>
            <person name="Iwama A."/>
            <person name="Ishikawa T."/>
            <person name="Jakt M."/>
            <person name="Kanapin A."/>
            <person name="Katoh M."/>
            <person name="Kawasawa Y."/>
            <person name="Kelso J."/>
            <person name="Kitamura H."/>
            <person name="Kitano H."/>
            <person name="Kollias G."/>
            <person name="Krishnan S.P."/>
            <person name="Kruger A."/>
            <person name="Kummerfeld S.K."/>
            <person name="Kurochkin I.V."/>
            <person name="Lareau L.F."/>
            <person name="Lazarevic D."/>
            <person name="Lipovich L."/>
            <person name="Liu J."/>
            <person name="Liuni S."/>
            <person name="McWilliam S."/>
            <person name="Madan Babu M."/>
            <person name="Madera M."/>
            <person name="Marchionni L."/>
            <person name="Matsuda H."/>
            <person name="Matsuzawa S."/>
            <person name="Miki H."/>
            <person name="Mignone F."/>
            <person name="Miyake S."/>
            <person name="Morris K."/>
            <person name="Mottagui-Tabar S."/>
            <person name="Mulder N."/>
            <person name="Nakano N."/>
            <person name="Nakauchi H."/>
            <person name="Ng P."/>
            <person name="Nilsson R."/>
            <person name="Nishiguchi S."/>
            <person name="Nishikawa S."/>
            <person name="Nori F."/>
            <person name="Ohara O."/>
            <person name="Okazaki Y."/>
            <person name="Orlando V."/>
            <person name="Pang K.C."/>
            <person name="Pavan W.J."/>
            <person name="Pavesi G."/>
            <person name="Pesole G."/>
            <person name="Petrovsky N."/>
            <person name="Piazza S."/>
            <person name="Reed J."/>
            <person name="Reid J.F."/>
            <person name="Ring B.Z."/>
            <person name="Ringwald M."/>
            <person name="Rost B."/>
            <person name="Ruan Y."/>
            <person name="Salzberg S.L."/>
            <person name="Sandelin A."/>
            <person name="Schneider C."/>
            <person name="Schoenbach C."/>
            <person name="Sekiguchi K."/>
            <person name="Semple C.A."/>
            <person name="Seno S."/>
            <person name="Sessa L."/>
            <person name="Sheng Y."/>
            <person name="Shibata Y."/>
            <person name="Shimada H."/>
            <person name="Shimada K."/>
            <person name="Silva D."/>
            <person name="Sinclair B."/>
            <person name="Sperling S."/>
            <person name="Stupka E."/>
            <person name="Sugiura K."/>
            <person name="Sultana R."/>
            <person name="Takenaka Y."/>
            <person name="Taki K."/>
            <person name="Tammoja K."/>
            <person name="Tan S.L."/>
            <person name="Tang S."/>
            <person name="Taylor M.S."/>
            <person name="Tegner J."/>
            <person name="Teichmann S.A."/>
            <person name="Ueda H.R."/>
            <person name="van Nimwegen E."/>
            <person name="Verardo R."/>
            <person name="Wei C.L."/>
            <person name="Yagi K."/>
            <person name="Yamanishi H."/>
            <person name="Zabarovsky E."/>
            <person name="Zhu S."/>
            <person name="Zimmer A."/>
            <person name="Hide W."/>
            <person name="Bult C."/>
            <person name="Grimmond S.M."/>
            <person name="Teasdale R.D."/>
            <person name="Liu E.T."/>
            <person name="Brusic V."/>
            <person name="Quackenbush J."/>
            <person name="Wahlestedt C."/>
            <person name="Mattick J.S."/>
            <person name="Hume D.A."/>
            <person name="Kai C."/>
            <person name="Sasaki D."/>
            <person name="Tomaru Y."/>
            <person name="Fukuda S."/>
            <person name="Kanamori-Katayama M."/>
            <person name="Suzuki M."/>
            <person name="Aoki J."/>
            <person name="Arakawa T."/>
            <person name="Iida J."/>
            <person name="Imamura K."/>
            <person name="Itoh M."/>
            <person name="Kato T."/>
            <person name="Kawaji H."/>
            <person name="Kawagashira N."/>
            <person name="Kawashima T."/>
            <person name="Kojima M."/>
            <person name="Kondo S."/>
            <person name="Konno H."/>
            <person name="Nakano K."/>
            <person name="Ninomiya N."/>
            <person name="Nishio T."/>
            <person name="Okada M."/>
            <person name="Plessy C."/>
            <person name="Shibata K."/>
            <person name="Shiraki T."/>
            <person name="Suzuki S."/>
            <person name="Tagami M."/>
            <person name="Waki K."/>
            <person name="Watahiki A."/>
            <person name="Okamura-Oho Y."/>
            <person name="Suzuki H."/>
            <person name="Kawai J."/>
            <person name="Hayashizaki Y."/>
        </authorList>
    </citation>
    <scope>NUCLEOTIDE SEQUENCE [LARGE SCALE MRNA] (ISOFORM 1)</scope>
    <source>
        <strain>C57BL/6J</strain>
        <tissue>Bone</tissue>
        <tissue>Liver</tissue>
        <tissue>Thymus</tissue>
    </source>
</reference>
<reference key="3">
    <citation type="journal article" date="2009" name="PLoS Biol.">
        <title>Lineage-specific biology revealed by a finished genome assembly of the mouse.</title>
        <authorList>
            <person name="Church D.M."/>
            <person name="Goodstadt L."/>
            <person name="Hillier L.W."/>
            <person name="Zody M.C."/>
            <person name="Goldstein S."/>
            <person name="She X."/>
            <person name="Bult C.J."/>
            <person name="Agarwala R."/>
            <person name="Cherry J.L."/>
            <person name="DiCuccio M."/>
            <person name="Hlavina W."/>
            <person name="Kapustin Y."/>
            <person name="Meric P."/>
            <person name="Maglott D."/>
            <person name="Birtle Z."/>
            <person name="Marques A.C."/>
            <person name="Graves T."/>
            <person name="Zhou S."/>
            <person name="Teague B."/>
            <person name="Potamousis K."/>
            <person name="Churas C."/>
            <person name="Place M."/>
            <person name="Herschleb J."/>
            <person name="Runnheim R."/>
            <person name="Forrest D."/>
            <person name="Amos-Landgraf J."/>
            <person name="Schwartz D.C."/>
            <person name="Cheng Z."/>
            <person name="Lindblad-Toh K."/>
            <person name="Eichler E.E."/>
            <person name="Ponting C.P."/>
        </authorList>
    </citation>
    <scope>NUCLEOTIDE SEQUENCE [LARGE SCALE GENOMIC DNA]</scope>
    <source>
        <strain>C57BL/6J</strain>
    </source>
</reference>
<reference key="4">
    <citation type="journal article" date="2004" name="Genome Res.">
        <title>The status, quality, and expansion of the NIH full-length cDNA project: the Mammalian Gene Collection (MGC).</title>
        <authorList>
            <consortium name="The MGC Project Team"/>
        </authorList>
    </citation>
    <scope>NUCLEOTIDE SEQUENCE [LARGE SCALE MRNA] (ISOFORM 2)</scope>
    <source>
        <strain>NMRI</strain>
        <tissue>Mammary tumor</tissue>
    </source>
</reference>
<reference key="5">
    <citation type="submission" date="1999-01" db="EMBL/GenBank/DDBJ databases">
        <title>Cloning of a novel cytokine receptor-like molecule.</title>
        <authorList>
            <person name="Maeda M."/>
            <person name="Nomura H."/>
        </authorList>
    </citation>
    <scope>NUCLEOTIDE SEQUENCE [MRNA] OF 5-442 (ISOFORM 1)</scope>
    <source>
        <tissue>Brain</tissue>
    </source>
</reference>
<reference key="6">
    <citation type="journal article" date="2010" name="Cell">
        <title>A tissue-specific atlas of mouse protein phosphorylation and expression.</title>
        <authorList>
            <person name="Huttlin E.L."/>
            <person name="Jedrychowski M.P."/>
            <person name="Elias J.E."/>
            <person name="Goswami T."/>
            <person name="Rad R."/>
            <person name="Beausoleil S.A."/>
            <person name="Villen J."/>
            <person name="Haas W."/>
            <person name="Sowa M.E."/>
            <person name="Gygi S.P."/>
        </authorList>
    </citation>
    <scope>IDENTIFICATION BY MASS SPECTROMETRY [LARGE SCALE ANALYSIS]</scope>
    <source>
        <tissue>Lung</tissue>
        <tissue>Spleen</tissue>
        <tissue>Testis</tissue>
    </source>
</reference>
<protein>
    <recommendedName>
        <fullName>Cytokine receptor-like factor 3</fullName>
    </recommendedName>
    <alternativeName>
        <fullName>Cytokine receptor-like molecule 9</fullName>
        <shortName>CREME-9</shortName>
    </alternativeName>
    <alternativeName>
        <fullName>Cytokine receptor-related factor 4</fullName>
    </alternativeName>
</protein>
<accession>Q9Z2L7</accession>
<accession>Q5SYK6</accession>
<accession>Q91W21</accession>
<accession>Q9R262</accession>
<evidence type="ECO:0000250" key="1"/>
<evidence type="ECO:0000255" key="2"/>
<evidence type="ECO:0000255" key="3">
    <source>
        <dbReference type="PROSITE-ProRule" id="PRU00316"/>
    </source>
</evidence>
<evidence type="ECO:0000303" key="4">
    <source>
    </source>
</evidence>
<evidence type="ECO:0000305" key="5"/>
<evidence type="ECO:0007829" key="6">
    <source>
        <dbReference type="PDB" id="6RPX"/>
    </source>
</evidence>
<name>CRLF3_MOUSE</name>
<keyword id="KW-0002">3D-structure</keyword>
<keyword id="KW-0025">Alternative splicing</keyword>
<keyword id="KW-0175">Coiled coil</keyword>
<keyword id="KW-0963">Cytoplasm</keyword>
<keyword id="KW-1185">Reference proteome</keyword>
<gene>
    <name type="primary">Crlf3</name>
    <name type="synonym">Creme9</name>
    <name type="synonym">Cytor4</name>
</gene>